<reference key="1">
    <citation type="submission" date="1999-01" db="EMBL/GenBank/DDBJ databases">
        <title>Cytidine deaminases in Arabidopsis thaliana: a gene family of eight members are located within a 24 kb region.</title>
        <authorList>
            <person name="Sanchez H."/>
            <person name="Schuster W."/>
        </authorList>
    </citation>
    <scope>NUCLEOTIDE SEQUENCE [GENOMIC DNA]</scope>
    <source>
        <strain>cv. Columbia</strain>
    </source>
</reference>
<reference key="2">
    <citation type="submission" date="1999-06" db="EMBL/GenBank/DDBJ databases">
        <title>Cloning and characterisation of a cytidine deaminase gene family from Arabidopsis thaliana.</title>
        <authorList>
            <person name="Faivre-Nitschke S.E."/>
            <person name="Grienenberger J.M."/>
            <person name="Gualberto J.M."/>
        </authorList>
    </citation>
    <scope>NUCLEOTIDE SEQUENCE [GENOMIC DNA]</scope>
    <source>
        <strain>cv. Landsberg erecta</strain>
    </source>
</reference>
<reference key="3">
    <citation type="journal article" date="1999" name="Nature">
        <title>Sequence and analysis of chromosome 4 of the plant Arabidopsis thaliana.</title>
        <authorList>
            <person name="Mayer K.F.X."/>
            <person name="Schueller C."/>
            <person name="Wambutt R."/>
            <person name="Murphy G."/>
            <person name="Volckaert G."/>
            <person name="Pohl T."/>
            <person name="Duesterhoeft A."/>
            <person name="Stiekema W."/>
            <person name="Entian K.-D."/>
            <person name="Terryn N."/>
            <person name="Harris B."/>
            <person name="Ansorge W."/>
            <person name="Brandt P."/>
            <person name="Grivell L.A."/>
            <person name="Rieger M."/>
            <person name="Weichselgartner M."/>
            <person name="de Simone V."/>
            <person name="Obermaier B."/>
            <person name="Mache R."/>
            <person name="Mueller M."/>
            <person name="Kreis M."/>
            <person name="Delseny M."/>
            <person name="Puigdomenech P."/>
            <person name="Watson M."/>
            <person name="Schmidtheini T."/>
            <person name="Reichert B."/>
            <person name="Portetelle D."/>
            <person name="Perez-Alonso M."/>
            <person name="Boutry M."/>
            <person name="Bancroft I."/>
            <person name="Vos P."/>
            <person name="Hoheisel J."/>
            <person name="Zimmermann W."/>
            <person name="Wedler H."/>
            <person name="Ridley P."/>
            <person name="Langham S.-A."/>
            <person name="McCullagh B."/>
            <person name="Bilham L."/>
            <person name="Robben J."/>
            <person name="van der Schueren J."/>
            <person name="Grymonprez B."/>
            <person name="Chuang Y.-J."/>
            <person name="Vandenbussche F."/>
            <person name="Braeken M."/>
            <person name="Weltjens I."/>
            <person name="Voet M."/>
            <person name="Bastiaens I."/>
            <person name="Aert R."/>
            <person name="Defoor E."/>
            <person name="Weitzenegger T."/>
            <person name="Bothe G."/>
            <person name="Ramsperger U."/>
            <person name="Hilbert H."/>
            <person name="Braun M."/>
            <person name="Holzer E."/>
            <person name="Brandt A."/>
            <person name="Peters S."/>
            <person name="van Staveren M."/>
            <person name="Dirkse W."/>
            <person name="Mooijman P."/>
            <person name="Klein Lankhorst R."/>
            <person name="Rose M."/>
            <person name="Hauf J."/>
            <person name="Koetter P."/>
            <person name="Berneiser S."/>
            <person name="Hempel S."/>
            <person name="Feldpausch M."/>
            <person name="Lamberth S."/>
            <person name="Van den Daele H."/>
            <person name="De Keyser A."/>
            <person name="Buysshaert C."/>
            <person name="Gielen J."/>
            <person name="Villarroel R."/>
            <person name="De Clercq R."/>
            <person name="van Montagu M."/>
            <person name="Rogers J."/>
            <person name="Cronin A."/>
            <person name="Quail M.A."/>
            <person name="Bray-Allen S."/>
            <person name="Clark L."/>
            <person name="Doggett J."/>
            <person name="Hall S."/>
            <person name="Kay M."/>
            <person name="Lennard N."/>
            <person name="McLay K."/>
            <person name="Mayes R."/>
            <person name="Pettett A."/>
            <person name="Rajandream M.A."/>
            <person name="Lyne M."/>
            <person name="Benes V."/>
            <person name="Rechmann S."/>
            <person name="Borkova D."/>
            <person name="Bloecker H."/>
            <person name="Scharfe M."/>
            <person name="Grimm M."/>
            <person name="Loehnert T.-H."/>
            <person name="Dose S."/>
            <person name="de Haan M."/>
            <person name="Maarse A.C."/>
            <person name="Schaefer M."/>
            <person name="Mueller-Auer S."/>
            <person name="Gabel C."/>
            <person name="Fuchs M."/>
            <person name="Fartmann B."/>
            <person name="Granderath K."/>
            <person name="Dauner D."/>
            <person name="Herzl A."/>
            <person name="Neumann S."/>
            <person name="Argiriou A."/>
            <person name="Vitale D."/>
            <person name="Liguori R."/>
            <person name="Piravandi E."/>
            <person name="Massenet O."/>
            <person name="Quigley F."/>
            <person name="Clabauld G."/>
            <person name="Muendlein A."/>
            <person name="Felber R."/>
            <person name="Schnabl S."/>
            <person name="Hiller R."/>
            <person name="Schmidt W."/>
            <person name="Lecharny A."/>
            <person name="Aubourg S."/>
            <person name="Chefdor F."/>
            <person name="Cooke R."/>
            <person name="Berger C."/>
            <person name="Monfort A."/>
            <person name="Casacuberta E."/>
            <person name="Gibbons T."/>
            <person name="Weber N."/>
            <person name="Vandenbol M."/>
            <person name="Bargues M."/>
            <person name="Terol J."/>
            <person name="Torres A."/>
            <person name="Perez-Perez A."/>
            <person name="Purnelle B."/>
            <person name="Bent E."/>
            <person name="Johnson S."/>
            <person name="Tacon D."/>
            <person name="Jesse T."/>
            <person name="Heijnen L."/>
            <person name="Schwarz S."/>
            <person name="Scholler P."/>
            <person name="Heber S."/>
            <person name="Francs P."/>
            <person name="Bielke C."/>
            <person name="Frishman D."/>
            <person name="Haase D."/>
            <person name="Lemcke K."/>
            <person name="Mewes H.-W."/>
            <person name="Stocker S."/>
            <person name="Zaccaria P."/>
            <person name="Bevan M."/>
            <person name="Wilson R.K."/>
            <person name="de la Bastide M."/>
            <person name="Habermann K."/>
            <person name="Parnell L."/>
            <person name="Dedhia N."/>
            <person name="Gnoj L."/>
            <person name="Schutz K."/>
            <person name="Huang E."/>
            <person name="Spiegel L."/>
            <person name="Sekhon M."/>
            <person name="Murray J."/>
            <person name="Sheet P."/>
            <person name="Cordes M."/>
            <person name="Abu-Threideh J."/>
            <person name="Stoneking T."/>
            <person name="Kalicki J."/>
            <person name="Graves T."/>
            <person name="Harmon G."/>
            <person name="Edwards J."/>
            <person name="Latreille P."/>
            <person name="Courtney L."/>
            <person name="Cloud J."/>
            <person name="Abbott A."/>
            <person name="Scott K."/>
            <person name="Johnson D."/>
            <person name="Minx P."/>
            <person name="Bentley D."/>
            <person name="Fulton B."/>
            <person name="Miller N."/>
            <person name="Greco T."/>
            <person name="Kemp K."/>
            <person name="Kramer J."/>
            <person name="Fulton L."/>
            <person name="Mardis E."/>
            <person name="Dante M."/>
            <person name="Pepin K."/>
            <person name="Hillier L.W."/>
            <person name="Nelson J."/>
            <person name="Spieth J."/>
            <person name="Ryan E."/>
            <person name="Andrews S."/>
            <person name="Geisel C."/>
            <person name="Layman D."/>
            <person name="Du H."/>
            <person name="Ali J."/>
            <person name="Berghoff A."/>
            <person name="Jones K."/>
            <person name="Drone K."/>
            <person name="Cotton M."/>
            <person name="Joshu C."/>
            <person name="Antonoiu B."/>
            <person name="Zidanic M."/>
            <person name="Strong C."/>
            <person name="Sun H."/>
            <person name="Lamar B."/>
            <person name="Yordan C."/>
            <person name="Ma P."/>
            <person name="Zhong J."/>
            <person name="Preston R."/>
            <person name="Vil D."/>
            <person name="Shekher M."/>
            <person name="Matero A."/>
            <person name="Shah R."/>
            <person name="Swaby I.K."/>
            <person name="O'Shaughnessy A."/>
            <person name="Rodriguez M."/>
            <person name="Hoffman J."/>
            <person name="Till S."/>
            <person name="Granat S."/>
            <person name="Shohdy N."/>
            <person name="Hasegawa A."/>
            <person name="Hameed A."/>
            <person name="Lodhi M."/>
            <person name="Johnson A."/>
            <person name="Chen E."/>
            <person name="Marra M.A."/>
            <person name="Martienssen R."/>
            <person name="McCombie W.R."/>
        </authorList>
    </citation>
    <scope>NUCLEOTIDE SEQUENCE [LARGE SCALE GENOMIC DNA]</scope>
    <source>
        <strain>cv. Columbia</strain>
    </source>
</reference>
<reference key="4">
    <citation type="journal article" date="2017" name="Plant J.">
        <title>Araport11: a complete reannotation of the Arabidopsis thaliana reference genome.</title>
        <authorList>
            <person name="Cheng C.Y."/>
            <person name="Krishnakumar V."/>
            <person name="Chan A.P."/>
            <person name="Thibaud-Nissen F."/>
            <person name="Schobel S."/>
            <person name="Town C.D."/>
        </authorList>
    </citation>
    <scope>GENOME REANNOTATION</scope>
    <source>
        <strain>cv. Columbia</strain>
    </source>
</reference>
<feature type="chain" id="PRO_0000429150" description="Cytidine deaminase 8">
    <location>
        <begin position="1"/>
        <end position="293"/>
    </location>
</feature>
<feature type="domain" description="CMP/dCMP-type deaminase 1" evidence="2">
    <location>
        <begin position="20"/>
        <end position="151"/>
    </location>
</feature>
<feature type="domain" description="CMP/dCMP-type deaminase 2" evidence="2">
    <location>
        <begin position="181"/>
        <end position="293"/>
    </location>
</feature>
<feature type="active site" description="Proton donor" evidence="1">
    <location>
        <position position="76"/>
    </location>
</feature>
<feature type="binding site" evidence="1">
    <location>
        <begin position="61"/>
        <end position="63"/>
    </location>
    <ligand>
        <name>substrate</name>
    </ligand>
</feature>
<feature type="binding site" evidence="1">
    <location>
        <position position="74"/>
    </location>
    <ligand>
        <name>Zn(2+)</name>
        <dbReference type="ChEBI" id="CHEBI:29105"/>
        <note>catalytic</note>
    </ligand>
</feature>
<feature type="binding site" evidence="1">
    <location>
        <position position="107"/>
    </location>
    <ligand>
        <name>Zn(2+)</name>
        <dbReference type="ChEBI" id="CHEBI:29105"/>
        <note>catalytic</note>
    </ligand>
</feature>
<feature type="binding site" evidence="1">
    <location>
        <position position="110"/>
    </location>
    <ligand>
        <name>Zn(2+)</name>
        <dbReference type="ChEBI" id="CHEBI:29105"/>
        <note>catalytic</note>
    </ligand>
</feature>
<feature type="sequence conflict" description="In Ref. 2; AAD39263." evidence="3" ref="2">
    <original>H</original>
    <variation>Q</variation>
    <location>
        <position position="11"/>
    </location>
</feature>
<feature type="sequence conflict" description="In Ref. 2; AAD39263." evidence="3" ref="2">
    <original>N</original>
    <variation>I</variation>
    <location>
        <position position="24"/>
    </location>
</feature>
<feature type="sequence conflict" description="In Ref. 2; AAD39263." evidence="3" ref="2">
    <original>R</original>
    <variation>H</variation>
    <location>
        <position position="31"/>
    </location>
</feature>
<feature type="sequence conflict" description="In Ref. 2; AAD39263." evidence="3" ref="2">
    <original>R</original>
    <variation>G</variation>
    <location>
        <position position="50"/>
    </location>
</feature>
<feature type="sequence conflict" description="In Ref. 2; AAD39263." evidence="3" ref="2">
    <original>L</original>
    <variation>I</variation>
    <location>
        <position position="80"/>
    </location>
</feature>
<feature type="sequence conflict" description="In Ref. 2; AAD39263." evidence="3" ref="2">
    <original>H</original>
    <variation>Q</variation>
    <location>
        <position position="115"/>
    </location>
</feature>
<feature type="sequence conflict" description="In Ref. 2; AAD39263." evidence="3" ref="2">
    <original>LISQ</original>
    <variation>FISL</variation>
    <location>
        <begin position="148"/>
        <end position="151"/>
    </location>
</feature>
<feature type="sequence conflict" description="In Ref. 2; AAD39263." evidence="3" ref="2">
    <original>C</original>
    <variation>Y</variation>
    <location>
        <position position="164"/>
    </location>
</feature>
<name>CDA8_ARATH</name>
<dbReference type="EC" id="3.5.4.5"/>
<dbReference type="EMBL" id="AF121877">
    <property type="protein sequence ID" value="AAD30441.1"/>
    <property type="molecule type" value="Genomic_DNA"/>
</dbReference>
<dbReference type="EMBL" id="AF080676">
    <property type="protein sequence ID" value="AAD39263.1"/>
    <property type="molecule type" value="Genomic_DNA"/>
</dbReference>
<dbReference type="EMBL" id="AL079344">
    <property type="protein sequence ID" value="CAB45317.1"/>
    <property type="molecule type" value="Genomic_DNA"/>
</dbReference>
<dbReference type="EMBL" id="AL161575">
    <property type="protein sequence ID" value="CAB79715.1"/>
    <property type="molecule type" value="Genomic_DNA"/>
</dbReference>
<dbReference type="EMBL" id="CP002687">
    <property type="protein sequence ID" value="AEE85646.1"/>
    <property type="molecule type" value="Genomic_DNA"/>
</dbReference>
<dbReference type="PIR" id="T09920">
    <property type="entry name" value="T09920"/>
</dbReference>
<dbReference type="RefSeq" id="NP_194686.1">
    <property type="nucleotide sequence ID" value="NM_119102.3"/>
</dbReference>
<dbReference type="SMR" id="Q9XEX4"/>
<dbReference type="FunCoup" id="Q9XEX4">
    <property type="interactions" value="126"/>
</dbReference>
<dbReference type="STRING" id="3702.Q9XEX4"/>
<dbReference type="PaxDb" id="3702-AT4G29570.1"/>
<dbReference type="ProteomicsDB" id="223923"/>
<dbReference type="EnsemblPlants" id="AT4G29570.1">
    <property type="protein sequence ID" value="AT4G29570.1"/>
    <property type="gene ID" value="AT4G29570"/>
</dbReference>
<dbReference type="GeneID" id="829078"/>
<dbReference type="Gramene" id="AT4G29570.1">
    <property type="protein sequence ID" value="AT4G29570.1"/>
    <property type="gene ID" value="AT4G29570"/>
</dbReference>
<dbReference type="KEGG" id="ath:AT4G29570"/>
<dbReference type="Araport" id="AT4G29570"/>
<dbReference type="TAIR" id="AT4G29570"/>
<dbReference type="eggNOG" id="KOG0833">
    <property type="taxonomic scope" value="Eukaryota"/>
</dbReference>
<dbReference type="HOGENOM" id="CLU_052424_1_0_1"/>
<dbReference type="InParanoid" id="Q9XEX4"/>
<dbReference type="OMA" id="KIADPDC"/>
<dbReference type="OrthoDB" id="414540at2759"/>
<dbReference type="PhylomeDB" id="Q9XEX4"/>
<dbReference type="BioCyc" id="ARA:AT4G29570-MONOMER"/>
<dbReference type="PRO" id="PR:Q9XEX4"/>
<dbReference type="Proteomes" id="UP000006548">
    <property type="component" value="Chromosome 4"/>
</dbReference>
<dbReference type="ExpressionAtlas" id="Q9XEX4">
    <property type="expression patterns" value="baseline and differential"/>
</dbReference>
<dbReference type="GO" id="GO:0005737">
    <property type="term" value="C:cytoplasm"/>
    <property type="evidence" value="ECO:0007669"/>
    <property type="project" value="UniProtKB-ARBA"/>
</dbReference>
<dbReference type="GO" id="GO:0004126">
    <property type="term" value="F:cytidine deaminase activity"/>
    <property type="evidence" value="ECO:0007669"/>
    <property type="project" value="UniProtKB-EC"/>
</dbReference>
<dbReference type="GO" id="GO:0042802">
    <property type="term" value="F:identical protein binding"/>
    <property type="evidence" value="ECO:0007669"/>
    <property type="project" value="UniProtKB-ARBA"/>
</dbReference>
<dbReference type="GO" id="GO:0008270">
    <property type="term" value="F:zinc ion binding"/>
    <property type="evidence" value="ECO:0007669"/>
    <property type="project" value="InterPro"/>
</dbReference>
<dbReference type="GO" id="GO:0009972">
    <property type="term" value="P:cytidine deamination"/>
    <property type="evidence" value="ECO:0007669"/>
    <property type="project" value="InterPro"/>
</dbReference>
<dbReference type="CDD" id="cd01283">
    <property type="entry name" value="cytidine_deaminase"/>
    <property type="match status" value="2"/>
</dbReference>
<dbReference type="FunFam" id="3.40.140.10:FF:000006">
    <property type="entry name" value="Cytidine deaminase"/>
    <property type="match status" value="1"/>
</dbReference>
<dbReference type="FunFam" id="3.40.140.10:FF:000145">
    <property type="entry name" value="Probable inactive cytidine deaminase 4"/>
    <property type="match status" value="1"/>
</dbReference>
<dbReference type="Gene3D" id="3.40.140.10">
    <property type="entry name" value="Cytidine Deaminase, domain 2"/>
    <property type="match status" value="2"/>
</dbReference>
<dbReference type="InterPro" id="IPR016192">
    <property type="entry name" value="APOBEC/CMP_deaminase_Zn-bd"/>
</dbReference>
<dbReference type="InterPro" id="IPR002125">
    <property type="entry name" value="CMP_dCMP_dom"/>
</dbReference>
<dbReference type="InterPro" id="IPR013171">
    <property type="entry name" value="Cyd/dCyd_deaminase_Zn-bd"/>
</dbReference>
<dbReference type="InterPro" id="IPR050202">
    <property type="entry name" value="Cyt/Deoxycyt_deaminase"/>
</dbReference>
<dbReference type="InterPro" id="IPR006263">
    <property type="entry name" value="Cyt_deam_dimer"/>
</dbReference>
<dbReference type="InterPro" id="IPR016193">
    <property type="entry name" value="Cytidine_deaminase-like"/>
</dbReference>
<dbReference type="NCBIfam" id="TIGR01355">
    <property type="entry name" value="cyt_deam_dimer"/>
    <property type="match status" value="1"/>
</dbReference>
<dbReference type="PANTHER" id="PTHR11644">
    <property type="entry name" value="CYTIDINE DEAMINASE"/>
    <property type="match status" value="1"/>
</dbReference>
<dbReference type="PANTHER" id="PTHR11644:SF28">
    <property type="entry name" value="CYTIDINE DEAMINASE 8-RELATED"/>
    <property type="match status" value="1"/>
</dbReference>
<dbReference type="Pfam" id="PF00383">
    <property type="entry name" value="dCMP_cyt_deam_1"/>
    <property type="match status" value="1"/>
</dbReference>
<dbReference type="Pfam" id="PF08211">
    <property type="entry name" value="dCMP_cyt_deam_2"/>
    <property type="match status" value="1"/>
</dbReference>
<dbReference type="PIRSF" id="PIRSF006334">
    <property type="entry name" value="Cdd_plus_pseudo"/>
    <property type="match status" value="1"/>
</dbReference>
<dbReference type="SUPFAM" id="SSF53927">
    <property type="entry name" value="Cytidine deaminase-like"/>
    <property type="match status" value="2"/>
</dbReference>
<dbReference type="PROSITE" id="PS00903">
    <property type="entry name" value="CYT_DCMP_DEAMINASES_1"/>
    <property type="match status" value="1"/>
</dbReference>
<dbReference type="PROSITE" id="PS51747">
    <property type="entry name" value="CYT_DCMP_DEAMINASES_2"/>
    <property type="match status" value="2"/>
</dbReference>
<organism>
    <name type="scientific">Arabidopsis thaliana</name>
    <name type="common">Mouse-ear cress</name>
    <dbReference type="NCBI Taxonomy" id="3702"/>
    <lineage>
        <taxon>Eukaryota</taxon>
        <taxon>Viridiplantae</taxon>
        <taxon>Streptophyta</taxon>
        <taxon>Embryophyta</taxon>
        <taxon>Tracheophyta</taxon>
        <taxon>Spermatophyta</taxon>
        <taxon>Magnoliopsida</taxon>
        <taxon>eudicotyledons</taxon>
        <taxon>Gunneridae</taxon>
        <taxon>Pentapetalae</taxon>
        <taxon>rosids</taxon>
        <taxon>malvids</taxon>
        <taxon>Brassicales</taxon>
        <taxon>Brassicaceae</taxon>
        <taxon>Camelineae</taxon>
        <taxon>Arabidopsis</taxon>
    </lineage>
</organism>
<accession>Q9XEX4</accession>
<accession>Q9XHQ8</accession>
<protein>
    <recommendedName>
        <fullName>Cytidine deaminase 8</fullName>
        <ecNumber>3.5.4.5</ecNumber>
    </recommendedName>
</protein>
<gene>
    <name type="primary">CDA8</name>
    <name type="synonym">DESA</name>
    <name type="ordered locus">At4g29570</name>
    <name type="ORF">T16L4.80</name>
</gene>
<comment type="function">
    <text evidence="1">This enzyme scavenges exogenous and endogenous cytidine and 2'-deoxycytidine for UMP synthesis.</text>
</comment>
<comment type="catalytic activity">
    <reaction>
        <text>cytidine + H2O + H(+) = uridine + NH4(+)</text>
        <dbReference type="Rhea" id="RHEA:16069"/>
        <dbReference type="ChEBI" id="CHEBI:15377"/>
        <dbReference type="ChEBI" id="CHEBI:15378"/>
        <dbReference type="ChEBI" id="CHEBI:16704"/>
        <dbReference type="ChEBI" id="CHEBI:17562"/>
        <dbReference type="ChEBI" id="CHEBI:28938"/>
        <dbReference type="EC" id="3.5.4.5"/>
    </reaction>
</comment>
<comment type="catalytic activity">
    <reaction>
        <text>2'-deoxycytidine + H2O + H(+) = 2'-deoxyuridine + NH4(+)</text>
        <dbReference type="Rhea" id="RHEA:13433"/>
        <dbReference type="ChEBI" id="CHEBI:15377"/>
        <dbReference type="ChEBI" id="CHEBI:15378"/>
        <dbReference type="ChEBI" id="CHEBI:15698"/>
        <dbReference type="ChEBI" id="CHEBI:16450"/>
        <dbReference type="ChEBI" id="CHEBI:28938"/>
        <dbReference type="EC" id="3.5.4.5"/>
    </reaction>
</comment>
<comment type="cofactor">
    <cofactor evidence="1">
        <name>Zn(2+)</name>
        <dbReference type="ChEBI" id="CHEBI:29105"/>
    </cofactor>
    <text evidence="1">Binds 1 zinc ion per subunit.</text>
</comment>
<comment type="subunit">
    <text evidence="1">Homodimer.</text>
</comment>
<comment type="similarity">
    <text evidence="3">Belongs to the cytidine and deoxycytidylate deaminase family.</text>
</comment>
<evidence type="ECO:0000250" key="1"/>
<evidence type="ECO:0000255" key="2">
    <source>
        <dbReference type="PROSITE-ProRule" id="PRU01083"/>
    </source>
</evidence>
<evidence type="ECO:0000305" key="3"/>
<keyword id="KW-0378">Hydrolase</keyword>
<keyword id="KW-0479">Metal-binding</keyword>
<keyword id="KW-1185">Reference proteome</keyword>
<keyword id="KW-0862">Zinc</keyword>
<sequence length="293" mass="32276">MAQPMRFMLNHIETESYGAFTPQNLSPLINRAIPHTRAQISGSPVVAVGRGSSGRTFFGVNVELPGLPLDHSIHAEQFLLANLALHFEQKLECIAISTNGYYFQEPCGHCCQLLHKIRDMSDTKILLTNPTGQKGTYMNLSTFLPQGLISQANVPRLLERNFNCIELINHSLYMDICSYSEHCNHLNCRALKAATISYAPDSKCPSGVALIDHRGKVYSGGYMESVAHNTSLGPVQAALVDFVANGDGQEFKNIVEAVLVEKKCGVLSQEATARMILEKIADPDCIFRVLHCK</sequence>
<proteinExistence type="inferred from homology"/>